<dbReference type="EC" id="1.3.3.11" evidence="1"/>
<dbReference type="EMBL" id="CP000680">
    <property type="protein sequence ID" value="ABP84728.1"/>
    <property type="molecule type" value="Genomic_DNA"/>
</dbReference>
<dbReference type="SMR" id="A4XTR2"/>
<dbReference type="STRING" id="399739.Pmen_1967"/>
<dbReference type="KEGG" id="pmy:Pmen_1967"/>
<dbReference type="PATRIC" id="fig|399739.8.peg.1993"/>
<dbReference type="eggNOG" id="COG5424">
    <property type="taxonomic scope" value="Bacteria"/>
</dbReference>
<dbReference type="HOGENOM" id="CLU_080136_0_0_6"/>
<dbReference type="OrthoDB" id="9800756at2"/>
<dbReference type="UniPathway" id="UPA00539"/>
<dbReference type="GO" id="GO:0033732">
    <property type="term" value="F:pyrroloquinoline-quinone synthase activity"/>
    <property type="evidence" value="ECO:0007669"/>
    <property type="project" value="UniProtKB-EC"/>
</dbReference>
<dbReference type="GO" id="GO:0018189">
    <property type="term" value="P:pyrroloquinoline quinone biosynthetic process"/>
    <property type="evidence" value="ECO:0007669"/>
    <property type="project" value="UniProtKB-UniRule"/>
</dbReference>
<dbReference type="GO" id="GO:0006790">
    <property type="term" value="P:sulfur compound metabolic process"/>
    <property type="evidence" value="ECO:0007669"/>
    <property type="project" value="UniProtKB-ARBA"/>
</dbReference>
<dbReference type="CDD" id="cd19370">
    <property type="entry name" value="TenA_PqqC"/>
    <property type="match status" value="1"/>
</dbReference>
<dbReference type="Gene3D" id="1.20.910.10">
    <property type="entry name" value="Heme oxygenase-like"/>
    <property type="match status" value="1"/>
</dbReference>
<dbReference type="HAMAP" id="MF_00654">
    <property type="entry name" value="PQQ_syn_PqqC"/>
    <property type="match status" value="1"/>
</dbReference>
<dbReference type="InterPro" id="IPR016084">
    <property type="entry name" value="Haem_Oase-like_multi-hlx"/>
</dbReference>
<dbReference type="InterPro" id="IPR011845">
    <property type="entry name" value="PqqC"/>
</dbReference>
<dbReference type="InterPro" id="IPR039068">
    <property type="entry name" value="PqqC-like"/>
</dbReference>
<dbReference type="InterPro" id="IPR004305">
    <property type="entry name" value="Thiaminase-2/PQQC"/>
</dbReference>
<dbReference type="NCBIfam" id="TIGR02111">
    <property type="entry name" value="PQQ_syn_pqqC"/>
    <property type="match status" value="1"/>
</dbReference>
<dbReference type="PANTHER" id="PTHR40279:SF3">
    <property type="entry name" value="4-AMINOBENZOATE SYNTHASE"/>
    <property type="match status" value="1"/>
</dbReference>
<dbReference type="PANTHER" id="PTHR40279">
    <property type="entry name" value="PQQC-LIKE PROTEIN"/>
    <property type="match status" value="1"/>
</dbReference>
<dbReference type="Pfam" id="PF03070">
    <property type="entry name" value="TENA_THI-4"/>
    <property type="match status" value="1"/>
</dbReference>
<dbReference type="SUPFAM" id="SSF48613">
    <property type="entry name" value="Heme oxygenase-like"/>
    <property type="match status" value="1"/>
</dbReference>
<feature type="chain" id="PRO_1000061674" description="Pyrroloquinoline-quinone synthase">
    <location>
        <begin position="1"/>
        <end position="250"/>
    </location>
</feature>
<gene>
    <name evidence="1" type="primary">pqqC</name>
    <name type="ordered locus">Pmen_1967</name>
</gene>
<reference key="1">
    <citation type="submission" date="2007-04" db="EMBL/GenBank/DDBJ databases">
        <title>Complete sequence of Pseudomonas mendocina ymp.</title>
        <authorList>
            <consortium name="US DOE Joint Genome Institute"/>
            <person name="Copeland A."/>
            <person name="Lucas S."/>
            <person name="Lapidus A."/>
            <person name="Barry K."/>
            <person name="Glavina del Rio T."/>
            <person name="Dalin E."/>
            <person name="Tice H."/>
            <person name="Pitluck S."/>
            <person name="Kiss H."/>
            <person name="Brettin T."/>
            <person name="Detter J.C."/>
            <person name="Bruce D."/>
            <person name="Han C."/>
            <person name="Schmutz J."/>
            <person name="Larimer F."/>
            <person name="Land M."/>
            <person name="Hauser L."/>
            <person name="Kyrpides N."/>
            <person name="Mikhailova N."/>
            <person name="Hersman L."/>
            <person name="Dubois J."/>
            <person name="Maurice P."/>
            <person name="Richardson P."/>
        </authorList>
    </citation>
    <scope>NUCLEOTIDE SEQUENCE [LARGE SCALE GENOMIC DNA]</scope>
    <source>
        <strain>ymp</strain>
    </source>
</reference>
<evidence type="ECO:0000255" key="1">
    <source>
        <dbReference type="HAMAP-Rule" id="MF_00654"/>
    </source>
</evidence>
<sequence>MSQAAMTPAEFEQALRAKGALYHIHHPFHRAMYEGRATREQIQGWVANRFYYQVNIPLKDAAILANCPDRETRREWIQRILDHDGAPGEEGGIEAWLRLAESVGLDREQVLSQELVLPGVRFAVDAYVNFARRASWQEAASSSLTELFAPTIHQSRLDAWPQHYPWIDAAGYDYFRNRLSQARRDVEHGLRITLEHYRTRDAQEHMLNILQFKLDVLWSMLDAMSMAYELERPPYHTVTAERVWHKGIDL</sequence>
<name>PQQC_ECTM1</name>
<comment type="function">
    <text evidence="1">Ring cyclization and eight-electron oxidation of 3a-(2-amino-2-carboxyethyl)-4,5-dioxo-4,5,6,7,8,9-hexahydroquinoline-7,9-dicarboxylic-acid to PQQ.</text>
</comment>
<comment type="catalytic activity">
    <reaction evidence="1">
        <text>6-(2-amino-2-carboxyethyl)-7,8-dioxo-1,2,3,4,7,8-hexahydroquinoline-2,4-dicarboxylate + 3 O2 = pyrroloquinoline quinone + 2 H2O2 + 2 H2O + H(+)</text>
        <dbReference type="Rhea" id="RHEA:10692"/>
        <dbReference type="ChEBI" id="CHEBI:15377"/>
        <dbReference type="ChEBI" id="CHEBI:15378"/>
        <dbReference type="ChEBI" id="CHEBI:15379"/>
        <dbReference type="ChEBI" id="CHEBI:16240"/>
        <dbReference type="ChEBI" id="CHEBI:58442"/>
        <dbReference type="ChEBI" id="CHEBI:58778"/>
        <dbReference type="EC" id="1.3.3.11"/>
    </reaction>
</comment>
<comment type="pathway">
    <text evidence="1">Cofactor biosynthesis; pyrroloquinoline quinone biosynthesis.</text>
</comment>
<comment type="similarity">
    <text evidence="1">Belongs to the PqqC family.</text>
</comment>
<organism>
    <name type="scientific">Ectopseudomonas mendocina (strain ymp)</name>
    <name type="common">Pseudomonas mendocina</name>
    <dbReference type="NCBI Taxonomy" id="399739"/>
    <lineage>
        <taxon>Bacteria</taxon>
        <taxon>Pseudomonadati</taxon>
        <taxon>Pseudomonadota</taxon>
        <taxon>Gammaproteobacteria</taxon>
        <taxon>Pseudomonadales</taxon>
        <taxon>Pseudomonadaceae</taxon>
        <taxon>Ectopseudomonas</taxon>
    </lineage>
</organism>
<accession>A4XTR2</accession>
<protein>
    <recommendedName>
        <fullName evidence="1">Pyrroloquinoline-quinone synthase</fullName>
        <ecNumber evidence="1">1.3.3.11</ecNumber>
    </recommendedName>
    <alternativeName>
        <fullName evidence="1">Coenzyme PQQ synthesis protein C</fullName>
    </alternativeName>
    <alternativeName>
        <fullName evidence="1">Pyrroloquinoline quinone biosynthesis protein C</fullName>
    </alternativeName>
</protein>
<keyword id="KW-0560">Oxidoreductase</keyword>
<keyword id="KW-0884">PQQ biosynthesis</keyword>
<proteinExistence type="inferred from homology"/>